<comment type="function">
    <text evidence="1">CRISPR (clustered regularly interspaced short palindromic repeat), is an adaptive immune system that provides protection against mobile genetic elements (viruses, transposable elements and conjugative plasmids). CRISPR clusters contain sequences complementary to antecedent mobile elements and target invading nucleic acids. CRISPR clusters are transcribed and processed into CRISPR RNA (crRNA). Functions as a ssRNA-specific endoribonuclease. Involved in the integration of spacer DNA into the CRISPR cassette.</text>
</comment>
<comment type="cofactor">
    <cofactor evidence="1">
        <name>Mg(2+)</name>
        <dbReference type="ChEBI" id="CHEBI:18420"/>
    </cofactor>
</comment>
<comment type="subunit">
    <text evidence="1">Homodimer, forms a heterotetramer with a Cas1 homodimer.</text>
</comment>
<comment type="similarity">
    <text evidence="1">Belongs to the CRISPR-associated endoribonuclease Cas2 protein family.</text>
</comment>
<dbReference type="EC" id="3.1.-.-" evidence="1"/>
<dbReference type="EMBL" id="AE009439">
    <property type="protein sequence ID" value="AAM02523.1"/>
    <property type="molecule type" value="Genomic_DNA"/>
</dbReference>
<dbReference type="RefSeq" id="WP_011019678.1">
    <property type="nucleotide sequence ID" value="NC_003551.1"/>
</dbReference>
<dbReference type="SMR" id="Q8TVS8"/>
<dbReference type="STRING" id="190192.MK1310"/>
<dbReference type="PaxDb" id="190192-MK1310"/>
<dbReference type="EnsemblBacteria" id="AAM02523">
    <property type="protein sequence ID" value="AAM02523"/>
    <property type="gene ID" value="MK1310"/>
</dbReference>
<dbReference type="GeneID" id="1477905"/>
<dbReference type="KEGG" id="mka:MK1310"/>
<dbReference type="HOGENOM" id="CLU_2285052_0_0_2"/>
<dbReference type="InParanoid" id="Q8TVS8"/>
<dbReference type="Proteomes" id="UP000001826">
    <property type="component" value="Chromosome"/>
</dbReference>
<dbReference type="GO" id="GO:0046872">
    <property type="term" value="F:metal ion binding"/>
    <property type="evidence" value="ECO:0007669"/>
    <property type="project" value="UniProtKB-UniRule"/>
</dbReference>
<dbReference type="GO" id="GO:0004521">
    <property type="term" value="F:RNA endonuclease activity"/>
    <property type="evidence" value="ECO:0007669"/>
    <property type="project" value="InterPro"/>
</dbReference>
<dbReference type="GO" id="GO:0051607">
    <property type="term" value="P:defense response to virus"/>
    <property type="evidence" value="ECO:0007669"/>
    <property type="project" value="UniProtKB-UniRule"/>
</dbReference>
<dbReference type="GO" id="GO:0043571">
    <property type="term" value="P:maintenance of CRISPR repeat elements"/>
    <property type="evidence" value="ECO:0007669"/>
    <property type="project" value="UniProtKB-UniRule"/>
</dbReference>
<dbReference type="CDD" id="cd09638">
    <property type="entry name" value="Cas2_I_II_III"/>
    <property type="match status" value="1"/>
</dbReference>
<dbReference type="Gene3D" id="3.30.70.240">
    <property type="match status" value="1"/>
</dbReference>
<dbReference type="HAMAP" id="MF_01471">
    <property type="entry name" value="Cas2"/>
    <property type="match status" value="1"/>
</dbReference>
<dbReference type="InterPro" id="IPR021127">
    <property type="entry name" value="CRISPR_associated_Cas2"/>
</dbReference>
<dbReference type="InterPro" id="IPR019199">
    <property type="entry name" value="Virulence_VapD/CRISPR_Cas2"/>
</dbReference>
<dbReference type="NCBIfam" id="TIGR01573">
    <property type="entry name" value="cas2"/>
    <property type="match status" value="1"/>
</dbReference>
<dbReference type="Pfam" id="PF09827">
    <property type="entry name" value="CRISPR_Cas2"/>
    <property type="match status" value="1"/>
</dbReference>
<dbReference type="SUPFAM" id="SSF143430">
    <property type="entry name" value="TTP0101/SSO1404-like"/>
    <property type="match status" value="1"/>
</dbReference>
<accession>Q8TVS8</accession>
<name>CAS2_METKA</name>
<proteinExistence type="inferred from homology"/>
<evidence type="ECO:0000255" key="1">
    <source>
        <dbReference type="HAMAP-Rule" id="MF_01471"/>
    </source>
</evidence>
<keyword id="KW-0051">Antiviral defense</keyword>
<keyword id="KW-0255">Endonuclease</keyword>
<keyword id="KW-0378">Hydrolase</keyword>
<keyword id="KW-0460">Magnesium</keyword>
<keyword id="KW-0479">Metal-binding</keyword>
<keyword id="KW-0540">Nuclease</keyword>
<keyword id="KW-1185">Reference proteome</keyword>
<organism>
    <name type="scientific">Methanopyrus kandleri (strain AV19 / DSM 6324 / JCM 9639 / NBRC 100938)</name>
    <dbReference type="NCBI Taxonomy" id="190192"/>
    <lineage>
        <taxon>Archaea</taxon>
        <taxon>Methanobacteriati</taxon>
        <taxon>Methanobacteriota</taxon>
        <taxon>Methanomada group</taxon>
        <taxon>Methanopyri</taxon>
        <taxon>Methanopyrales</taxon>
        <taxon>Methanopyraceae</taxon>
        <taxon>Methanopyrus</taxon>
    </lineage>
</organism>
<reference key="1">
    <citation type="journal article" date="2002" name="Proc. Natl. Acad. Sci. U.S.A.">
        <title>The complete genome of hyperthermophile Methanopyrus kandleri AV19 and monophyly of archaeal methanogens.</title>
        <authorList>
            <person name="Slesarev A.I."/>
            <person name="Mezhevaya K.V."/>
            <person name="Makarova K.S."/>
            <person name="Polushin N.N."/>
            <person name="Shcherbinina O.V."/>
            <person name="Shakhova V.V."/>
            <person name="Belova G.I."/>
            <person name="Aravind L."/>
            <person name="Natale D.A."/>
            <person name="Rogozin I.B."/>
            <person name="Tatusov R.L."/>
            <person name="Wolf Y.I."/>
            <person name="Stetter K.O."/>
            <person name="Malykh A.G."/>
            <person name="Koonin E.V."/>
            <person name="Kozyavkin S.A."/>
        </authorList>
    </citation>
    <scope>NUCLEOTIDE SEQUENCE [LARGE SCALE GENOMIC DNA]</scope>
    <source>
        <strain>AV19 / DSM 6324 / JCM 9639 / NBRC 100938</strain>
    </source>
</reference>
<protein>
    <recommendedName>
        <fullName evidence="1">CRISPR-associated endoribonuclease Cas2</fullName>
        <ecNumber evidence="1">3.1.-.-</ecNumber>
    </recommendedName>
</protein>
<gene>
    <name evidence="1" type="primary">cas2</name>
    <name type="ordered locus">MK1310</name>
</gene>
<feature type="chain" id="PRO_0000417744" description="CRISPR-associated endoribonuclease Cas2">
    <location>
        <begin position="1"/>
        <end position="101"/>
    </location>
</feature>
<feature type="binding site" evidence="1">
    <location>
        <position position="17"/>
    </location>
    <ligand>
        <name>Mg(2+)</name>
        <dbReference type="ChEBI" id="CHEBI:18420"/>
        <note>catalytic</note>
    </ligand>
</feature>
<sequence length="101" mass="11614">MGVLGGPSPRLRLYVYDFKEPGGEAERRKLRELLESHGAFRLQYSTYALLAEPEVHARVLRRVVARVDFEEGDSLIVVPMCRRCLRVARWVDAEGVRGLRF</sequence>